<keyword id="KW-0687">Ribonucleoprotein</keyword>
<keyword id="KW-0689">Ribosomal protein</keyword>
<keyword id="KW-0694">RNA-binding</keyword>
<keyword id="KW-0699">rRNA-binding</keyword>
<reference key="1">
    <citation type="journal article" date="2010" name="Genome Biol. Evol.">
        <title>Continuing evolution of Burkholderia mallei through genome reduction and large-scale rearrangements.</title>
        <authorList>
            <person name="Losada L."/>
            <person name="Ronning C.M."/>
            <person name="DeShazer D."/>
            <person name="Woods D."/>
            <person name="Fedorova N."/>
            <person name="Kim H.S."/>
            <person name="Shabalina S.A."/>
            <person name="Pearson T.R."/>
            <person name="Brinkac L."/>
            <person name="Tan P."/>
            <person name="Nandi T."/>
            <person name="Crabtree J."/>
            <person name="Badger J."/>
            <person name="Beckstrom-Sternberg S."/>
            <person name="Saqib M."/>
            <person name="Schutzer S.E."/>
            <person name="Keim P."/>
            <person name="Nierman W.C."/>
        </authorList>
    </citation>
    <scope>NUCLEOTIDE SEQUENCE [LARGE SCALE GENOMIC DNA]</scope>
    <source>
        <strain>NCTC 10229</strain>
    </source>
</reference>
<sequence length="121" mass="13062">MDKTQSRLRRARQTRIKIAELQVARLAVHRTNTHIYAQVFSPCGTKVLASASTLEAEVRAQLADKSGKGGNVAAATLIGKRIAEKAKAAGIESVAFDRSGFRYHGRVKALAEAAREAGLKF</sequence>
<comment type="function">
    <text evidence="1">This is one of the proteins that bind and probably mediate the attachment of the 5S RNA into the large ribosomal subunit, where it forms part of the central protuberance.</text>
</comment>
<comment type="subunit">
    <text evidence="1">Part of the 50S ribosomal subunit; part of the 5S rRNA/L5/L18/L25 subcomplex. Contacts the 5S and 23S rRNAs.</text>
</comment>
<comment type="similarity">
    <text evidence="1">Belongs to the universal ribosomal protein uL18 family.</text>
</comment>
<proteinExistence type="inferred from homology"/>
<organism>
    <name type="scientific">Burkholderia mallei (strain NCTC 10229)</name>
    <dbReference type="NCBI Taxonomy" id="412022"/>
    <lineage>
        <taxon>Bacteria</taxon>
        <taxon>Pseudomonadati</taxon>
        <taxon>Pseudomonadota</taxon>
        <taxon>Betaproteobacteria</taxon>
        <taxon>Burkholderiales</taxon>
        <taxon>Burkholderiaceae</taxon>
        <taxon>Burkholderia</taxon>
        <taxon>pseudomallei group</taxon>
    </lineage>
</organism>
<dbReference type="EMBL" id="CP000546">
    <property type="protein sequence ID" value="ABN01044.1"/>
    <property type="molecule type" value="Genomic_DNA"/>
</dbReference>
<dbReference type="RefSeq" id="WP_004197946.1">
    <property type="nucleotide sequence ID" value="NC_008836.1"/>
</dbReference>
<dbReference type="SMR" id="A2S7J2"/>
<dbReference type="GeneID" id="93061816"/>
<dbReference type="KEGG" id="bml:BMA10229_A1940"/>
<dbReference type="HOGENOM" id="CLU_098841_0_1_4"/>
<dbReference type="Proteomes" id="UP000002283">
    <property type="component" value="Chromosome I"/>
</dbReference>
<dbReference type="GO" id="GO:0022625">
    <property type="term" value="C:cytosolic large ribosomal subunit"/>
    <property type="evidence" value="ECO:0007669"/>
    <property type="project" value="TreeGrafter"/>
</dbReference>
<dbReference type="GO" id="GO:0008097">
    <property type="term" value="F:5S rRNA binding"/>
    <property type="evidence" value="ECO:0007669"/>
    <property type="project" value="TreeGrafter"/>
</dbReference>
<dbReference type="GO" id="GO:0003735">
    <property type="term" value="F:structural constituent of ribosome"/>
    <property type="evidence" value="ECO:0007669"/>
    <property type="project" value="InterPro"/>
</dbReference>
<dbReference type="GO" id="GO:0006412">
    <property type="term" value="P:translation"/>
    <property type="evidence" value="ECO:0007669"/>
    <property type="project" value="UniProtKB-UniRule"/>
</dbReference>
<dbReference type="CDD" id="cd00432">
    <property type="entry name" value="Ribosomal_L18_L5e"/>
    <property type="match status" value="1"/>
</dbReference>
<dbReference type="FunFam" id="3.30.420.100:FF:000001">
    <property type="entry name" value="50S ribosomal protein L18"/>
    <property type="match status" value="1"/>
</dbReference>
<dbReference type="Gene3D" id="3.30.420.100">
    <property type="match status" value="1"/>
</dbReference>
<dbReference type="HAMAP" id="MF_01337_B">
    <property type="entry name" value="Ribosomal_uL18_B"/>
    <property type="match status" value="1"/>
</dbReference>
<dbReference type="InterPro" id="IPR004389">
    <property type="entry name" value="Ribosomal_uL18_bac-type"/>
</dbReference>
<dbReference type="InterPro" id="IPR005484">
    <property type="entry name" value="Ribosomal_uL18_bac/euk"/>
</dbReference>
<dbReference type="NCBIfam" id="TIGR00060">
    <property type="entry name" value="L18_bact"/>
    <property type="match status" value="1"/>
</dbReference>
<dbReference type="PANTHER" id="PTHR12899">
    <property type="entry name" value="39S RIBOSOMAL PROTEIN L18, MITOCHONDRIAL"/>
    <property type="match status" value="1"/>
</dbReference>
<dbReference type="PANTHER" id="PTHR12899:SF3">
    <property type="entry name" value="LARGE RIBOSOMAL SUBUNIT PROTEIN UL18M"/>
    <property type="match status" value="1"/>
</dbReference>
<dbReference type="Pfam" id="PF00861">
    <property type="entry name" value="Ribosomal_L18p"/>
    <property type="match status" value="1"/>
</dbReference>
<dbReference type="SUPFAM" id="SSF53137">
    <property type="entry name" value="Translational machinery components"/>
    <property type="match status" value="1"/>
</dbReference>
<gene>
    <name evidence="1" type="primary">rplR</name>
    <name type="ordered locus">BMA10229_A1940</name>
</gene>
<name>RL18_BURM9</name>
<evidence type="ECO:0000255" key="1">
    <source>
        <dbReference type="HAMAP-Rule" id="MF_01337"/>
    </source>
</evidence>
<evidence type="ECO:0000305" key="2"/>
<protein>
    <recommendedName>
        <fullName evidence="1">Large ribosomal subunit protein uL18</fullName>
    </recommendedName>
    <alternativeName>
        <fullName evidence="2">50S ribosomal protein L18</fullName>
    </alternativeName>
</protein>
<feature type="chain" id="PRO_1000052998" description="Large ribosomal subunit protein uL18">
    <location>
        <begin position="1"/>
        <end position="121"/>
    </location>
</feature>
<accession>A2S7J2</accession>